<feature type="chain" id="PRO_0000195003" description="Dolichol-phosphate mannosyltransferase subunit 3">
    <location>
        <begin position="1"/>
        <end position="90"/>
    </location>
</feature>
<feature type="transmembrane region" description="Helical" evidence="2">
    <location>
        <begin position="7"/>
        <end position="26"/>
    </location>
</feature>
<feature type="transmembrane region" description="Helical" evidence="2">
    <location>
        <begin position="36"/>
        <end position="58"/>
    </location>
</feature>
<reference key="1">
    <citation type="journal article" date="2002" name="Nature">
        <title>The genome sequence of Schizosaccharomyces pombe.</title>
        <authorList>
            <person name="Wood V."/>
            <person name="Gwilliam R."/>
            <person name="Rajandream M.A."/>
            <person name="Lyne M.H."/>
            <person name="Lyne R."/>
            <person name="Stewart A."/>
            <person name="Sgouros J.G."/>
            <person name="Peat N."/>
            <person name="Hayles J."/>
            <person name="Baker S.G."/>
            <person name="Basham D."/>
            <person name="Bowman S."/>
            <person name="Brooks K."/>
            <person name="Brown D."/>
            <person name="Brown S."/>
            <person name="Chillingworth T."/>
            <person name="Churcher C.M."/>
            <person name="Collins M."/>
            <person name="Connor R."/>
            <person name="Cronin A."/>
            <person name="Davis P."/>
            <person name="Feltwell T."/>
            <person name="Fraser A."/>
            <person name="Gentles S."/>
            <person name="Goble A."/>
            <person name="Hamlin N."/>
            <person name="Harris D.E."/>
            <person name="Hidalgo J."/>
            <person name="Hodgson G."/>
            <person name="Holroyd S."/>
            <person name="Hornsby T."/>
            <person name="Howarth S."/>
            <person name="Huckle E.J."/>
            <person name="Hunt S."/>
            <person name="Jagels K."/>
            <person name="James K.D."/>
            <person name="Jones L."/>
            <person name="Jones M."/>
            <person name="Leather S."/>
            <person name="McDonald S."/>
            <person name="McLean J."/>
            <person name="Mooney P."/>
            <person name="Moule S."/>
            <person name="Mungall K.L."/>
            <person name="Murphy L.D."/>
            <person name="Niblett D."/>
            <person name="Odell C."/>
            <person name="Oliver K."/>
            <person name="O'Neil S."/>
            <person name="Pearson D."/>
            <person name="Quail M.A."/>
            <person name="Rabbinowitsch E."/>
            <person name="Rutherford K.M."/>
            <person name="Rutter S."/>
            <person name="Saunders D."/>
            <person name="Seeger K."/>
            <person name="Sharp S."/>
            <person name="Skelton J."/>
            <person name="Simmonds M.N."/>
            <person name="Squares R."/>
            <person name="Squares S."/>
            <person name="Stevens K."/>
            <person name="Taylor K."/>
            <person name="Taylor R.G."/>
            <person name="Tivey A."/>
            <person name="Walsh S.V."/>
            <person name="Warren T."/>
            <person name="Whitehead S."/>
            <person name="Woodward J.R."/>
            <person name="Volckaert G."/>
            <person name="Aert R."/>
            <person name="Robben J."/>
            <person name="Grymonprez B."/>
            <person name="Weltjens I."/>
            <person name="Vanstreels E."/>
            <person name="Rieger M."/>
            <person name="Schaefer M."/>
            <person name="Mueller-Auer S."/>
            <person name="Gabel C."/>
            <person name="Fuchs M."/>
            <person name="Duesterhoeft A."/>
            <person name="Fritzc C."/>
            <person name="Holzer E."/>
            <person name="Moestl D."/>
            <person name="Hilbert H."/>
            <person name="Borzym K."/>
            <person name="Langer I."/>
            <person name="Beck A."/>
            <person name="Lehrach H."/>
            <person name="Reinhardt R."/>
            <person name="Pohl T.M."/>
            <person name="Eger P."/>
            <person name="Zimmermann W."/>
            <person name="Wedler H."/>
            <person name="Wambutt R."/>
            <person name="Purnelle B."/>
            <person name="Goffeau A."/>
            <person name="Cadieu E."/>
            <person name="Dreano S."/>
            <person name="Gloux S."/>
            <person name="Lelaure V."/>
            <person name="Mottier S."/>
            <person name="Galibert F."/>
            <person name="Aves S.J."/>
            <person name="Xiang Z."/>
            <person name="Hunt C."/>
            <person name="Moore K."/>
            <person name="Hurst S.M."/>
            <person name="Lucas M."/>
            <person name="Rochet M."/>
            <person name="Gaillardin C."/>
            <person name="Tallada V.A."/>
            <person name="Garzon A."/>
            <person name="Thode G."/>
            <person name="Daga R.R."/>
            <person name="Cruzado L."/>
            <person name="Jimenez J."/>
            <person name="Sanchez M."/>
            <person name="del Rey F."/>
            <person name="Benito J."/>
            <person name="Dominguez A."/>
            <person name="Revuelta J.L."/>
            <person name="Moreno S."/>
            <person name="Armstrong J."/>
            <person name="Forsburg S.L."/>
            <person name="Cerutti L."/>
            <person name="Lowe T."/>
            <person name="McCombie W.R."/>
            <person name="Paulsen I."/>
            <person name="Potashkin J."/>
            <person name="Shpakovski G.V."/>
            <person name="Ussery D."/>
            <person name="Barrell B.G."/>
            <person name="Nurse P."/>
        </authorList>
    </citation>
    <scope>NUCLEOTIDE SEQUENCE [LARGE SCALE GENOMIC DNA]</scope>
    <source>
        <strain>972 / ATCC 24843</strain>
    </source>
</reference>
<reference key="2">
    <citation type="journal article" date="2000" name="EMBO J.">
        <title>Human dolichol-phosphate-mannose synthase consists of three subunits, DPM1, DPM2 and DPM3.</title>
        <authorList>
            <person name="Maeda Y."/>
            <person name="Tanaka S."/>
            <person name="Hino J."/>
            <person name="Kangawa K."/>
            <person name="Kinoshita T."/>
        </authorList>
    </citation>
    <scope>CHARACTERIZATION</scope>
</reference>
<sequence>MQRIHKVILYYVSLTILYRVTYLFDLEEPWSTLRPYTPYLFILAFGSYLGITLLYNVATTNDKPEAYVDLVKDIKEAQDALRSKGMTIED</sequence>
<keyword id="KW-0256">Endoplasmic reticulum</keyword>
<keyword id="KW-0472">Membrane</keyword>
<keyword id="KW-1185">Reference proteome</keyword>
<keyword id="KW-0812">Transmembrane</keyword>
<keyword id="KW-1133">Transmembrane helix</keyword>
<protein>
    <recommendedName>
        <fullName>Dolichol-phosphate mannosyltransferase subunit 3</fullName>
    </recommendedName>
    <alternativeName>
        <fullName>DPM synthase complex subunit 3</fullName>
    </alternativeName>
    <alternativeName>
        <fullName>Dolichol-phosphate mannose synthase subunit 3</fullName>
    </alternativeName>
    <alternativeName>
        <fullName>Dolichyl-phosphate beta-D-mannosyltransferase subunit 3</fullName>
    </alternativeName>
    <alternativeName>
        <fullName>Mannose-P-dolichol synthase subunit 3</fullName>
        <shortName>MPD synthase subunit 3</shortName>
    </alternativeName>
</protein>
<comment type="function">
    <text>Stabilizer subunit of the dolichol-phosphate-mannose synthase complex.</text>
</comment>
<comment type="subunit">
    <text evidence="1">Composed of three subunits; dpm1, dpm2 and dpm3.</text>
</comment>
<comment type="subcellular location">
    <subcellularLocation>
        <location evidence="1">Endoplasmic reticulum membrane</location>
        <topology evidence="1">Multi-pass membrane protein</topology>
    </subcellularLocation>
</comment>
<comment type="similarity">
    <text evidence="3">Belongs to the DPM3 family.</text>
</comment>
<name>DPM3_SCHPO</name>
<organism>
    <name type="scientific">Schizosaccharomyces pombe (strain 972 / ATCC 24843)</name>
    <name type="common">Fission yeast</name>
    <dbReference type="NCBI Taxonomy" id="284812"/>
    <lineage>
        <taxon>Eukaryota</taxon>
        <taxon>Fungi</taxon>
        <taxon>Dikarya</taxon>
        <taxon>Ascomycota</taxon>
        <taxon>Taphrinomycotina</taxon>
        <taxon>Schizosaccharomycetes</taxon>
        <taxon>Schizosaccharomycetales</taxon>
        <taxon>Schizosaccharomycetaceae</taxon>
        <taxon>Schizosaccharomyces</taxon>
    </lineage>
</organism>
<proteinExistence type="evidence at protein level"/>
<accession>O94633</accession>
<dbReference type="EMBL" id="CU329671">
    <property type="protein sequence ID" value="CAB37621.1"/>
    <property type="molecule type" value="Genomic_DNA"/>
</dbReference>
<dbReference type="PIR" id="T39515">
    <property type="entry name" value="T39515"/>
</dbReference>
<dbReference type="RefSeq" id="NP_596640.1">
    <property type="nucleotide sequence ID" value="NM_001022562.2"/>
</dbReference>
<dbReference type="SMR" id="O94633"/>
<dbReference type="BioGRID" id="276219">
    <property type="interactions" value="3"/>
</dbReference>
<dbReference type="FunCoup" id="O94633">
    <property type="interactions" value="26"/>
</dbReference>
<dbReference type="STRING" id="284812.O94633"/>
<dbReference type="iPTMnet" id="O94633"/>
<dbReference type="PaxDb" id="4896-SPBC1677.02.1"/>
<dbReference type="EnsemblFungi" id="SPBC1677.02.1">
    <property type="protein sequence ID" value="SPBC1677.02.1:pep"/>
    <property type="gene ID" value="SPBC1677.02"/>
</dbReference>
<dbReference type="GeneID" id="2539664"/>
<dbReference type="KEGG" id="spo:2539664"/>
<dbReference type="PomBase" id="SPBC1677.02">
    <property type="gene designation" value="dpm3"/>
</dbReference>
<dbReference type="VEuPathDB" id="FungiDB:SPBC1677.02"/>
<dbReference type="eggNOG" id="KOG4841">
    <property type="taxonomic scope" value="Eukaryota"/>
</dbReference>
<dbReference type="HOGENOM" id="CLU_2442130_0_0_1"/>
<dbReference type="InParanoid" id="O94633"/>
<dbReference type="OMA" id="VATTHDK"/>
<dbReference type="PhylomeDB" id="O94633"/>
<dbReference type="PRO" id="PR:O94633"/>
<dbReference type="Proteomes" id="UP000002485">
    <property type="component" value="Chromosome II"/>
</dbReference>
<dbReference type="GO" id="GO:0033185">
    <property type="term" value="C:dolichol-phosphate-mannose synthase complex"/>
    <property type="evidence" value="ECO:0000318"/>
    <property type="project" value="GO_Central"/>
</dbReference>
<dbReference type="GO" id="GO:0005783">
    <property type="term" value="C:endoplasmic reticulum"/>
    <property type="evidence" value="ECO:0007005"/>
    <property type="project" value="PomBase"/>
</dbReference>
<dbReference type="GO" id="GO:0005789">
    <property type="term" value="C:endoplasmic reticulum membrane"/>
    <property type="evidence" value="ECO:0000318"/>
    <property type="project" value="GO_Central"/>
</dbReference>
<dbReference type="GO" id="GO:0043495">
    <property type="term" value="F:protein-membrane adaptor activity"/>
    <property type="evidence" value="ECO:0000266"/>
    <property type="project" value="PomBase"/>
</dbReference>
<dbReference type="GO" id="GO:0180047">
    <property type="term" value="P:dolichol phosphate mannose biosynthetic process"/>
    <property type="evidence" value="ECO:0000304"/>
    <property type="project" value="PomBase"/>
</dbReference>
<dbReference type="GO" id="GO:0006506">
    <property type="term" value="P:GPI anchor biosynthetic process"/>
    <property type="evidence" value="ECO:0000318"/>
    <property type="project" value="GO_Central"/>
</dbReference>
<dbReference type="GO" id="GO:0006486">
    <property type="term" value="P:protein glycosylation"/>
    <property type="evidence" value="ECO:0007669"/>
    <property type="project" value="InterPro"/>
</dbReference>
<dbReference type="InterPro" id="IPR013174">
    <property type="entry name" value="DPM3"/>
</dbReference>
<dbReference type="PANTHER" id="PTHR16433">
    <property type="entry name" value="DOLICHOL-PHOSPHATE MANNOSYLTRANSFERASE SUBUNIT 3"/>
    <property type="match status" value="1"/>
</dbReference>
<dbReference type="PANTHER" id="PTHR16433:SF0">
    <property type="entry name" value="DOLICHOL-PHOSPHATE MANNOSYLTRANSFERASE SUBUNIT 3"/>
    <property type="match status" value="1"/>
</dbReference>
<dbReference type="Pfam" id="PF08285">
    <property type="entry name" value="DPM3"/>
    <property type="match status" value="1"/>
</dbReference>
<gene>
    <name type="primary">dpm3</name>
    <name type="ORF">SPBC1677.02</name>
</gene>
<evidence type="ECO:0000250" key="1"/>
<evidence type="ECO:0000255" key="2"/>
<evidence type="ECO:0000305" key="3"/>